<keyword id="KW-0227">DNA damage</keyword>
<keyword id="KW-0234">DNA repair</keyword>
<keyword id="KW-0255">Endonuclease</keyword>
<keyword id="KW-0378">Hydrolase</keyword>
<keyword id="KW-0479">Metal-binding</keyword>
<keyword id="KW-0540">Nuclease</keyword>
<keyword id="KW-1185">Reference proteome</keyword>
<keyword id="KW-0862">Zinc</keyword>
<proteinExistence type="inferred from homology"/>
<sequence>MKYIGAHVSAAGGLANAPARAAEIGATAFALFTKNQRQWRAAPLTPQVIDDFKIACEKYHFSAAQILPHDSYLINLGHPVSEALEKSRDAFLDEMQRCEQLGLTLLNFHPGSHLMQIAQEDCLARIAESINIALAQTEGVTAVIENTAGQGSNLGFEFEQLAAIIDGVEDKSRVGVCIDTCHAFAAGYDLRTPEACEKTFAEFGKIVGFQYLRGMHLNDAKSAFGSRVDRHHSLGEGNIGHDAFRWIMQDGRFDGIPLILETINPDIWAEEIAWLKAQQIAEAMA</sequence>
<protein>
    <recommendedName>
        <fullName evidence="1">Probable endonuclease 4</fullName>
        <ecNumber evidence="1">3.1.21.2</ecNumber>
    </recommendedName>
    <alternativeName>
        <fullName evidence="1">Endodeoxyribonuclease IV</fullName>
    </alternativeName>
    <alternativeName>
        <fullName evidence="1">Endonuclease IV</fullName>
    </alternativeName>
</protein>
<feature type="chain" id="PRO_0000190867" description="Probable endonuclease 4">
    <location>
        <begin position="1"/>
        <end position="285"/>
    </location>
</feature>
<feature type="binding site" evidence="1">
    <location>
        <position position="69"/>
    </location>
    <ligand>
        <name>Zn(2+)</name>
        <dbReference type="ChEBI" id="CHEBI:29105"/>
        <label>1</label>
    </ligand>
</feature>
<feature type="binding site" evidence="1">
    <location>
        <position position="109"/>
    </location>
    <ligand>
        <name>Zn(2+)</name>
        <dbReference type="ChEBI" id="CHEBI:29105"/>
        <label>1</label>
    </ligand>
</feature>
<feature type="binding site" evidence="1">
    <location>
        <position position="145"/>
    </location>
    <ligand>
        <name>Zn(2+)</name>
        <dbReference type="ChEBI" id="CHEBI:29105"/>
        <label>1</label>
    </ligand>
</feature>
<feature type="binding site" evidence="1">
    <location>
        <position position="145"/>
    </location>
    <ligand>
        <name>Zn(2+)</name>
        <dbReference type="ChEBI" id="CHEBI:29105"/>
        <label>2</label>
    </ligand>
</feature>
<feature type="binding site" evidence="1">
    <location>
        <position position="179"/>
    </location>
    <ligand>
        <name>Zn(2+)</name>
        <dbReference type="ChEBI" id="CHEBI:29105"/>
        <label>2</label>
    </ligand>
</feature>
<feature type="binding site" evidence="1">
    <location>
        <position position="182"/>
    </location>
    <ligand>
        <name>Zn(2+)</name>
        <dbReference type="ChEBI" id="CHEBI:29105"/>
        <label>3</label>
    </ligand>
</feature>
<feature type="binding site" evidence="1">
    <location>
        <position position="216"/>
    </location>
    <ligand>
        <name>Zn(2+)</name>
        <dbReference type="ChEBI" id="CHEBI:29105"/>
        <label>2</label>
    </ligand>
</feature>
<feature type="binding site" evidence="1">
    <location>
        <position position="229"/>
    </location>
    <ligand>
        <name>Zn(2+)</name>
        <dbReference type="ChEBI" id="CHEBI:29105"/>
        <label>3</label>
    </ligand>
</feature>
<feature type="binding site" evidence="1">
    <location>
        <position position="231"/>
    </location>
    <ligand>
        <name>Zn(2+)</name>
        <dbReference type="ChEBI" id="CHEBI:29105"/>
        <label>3</label>
    </ligand>
</feature>
<feature type="binding site" evidence="1">
    <location>
        <position position="261"/>
    </location>
    <ligand>
        <name>Zn(2+)</name>
        <dbReference type="ChEBI" id="CHEBI:29105"/>
        <label>2</label>
    </ligand>
</feature>
<gene>
    <name evidence="1" type="primary">nfo</name>
    <name type="ordered locus">STM2203</name>
</gene>
<dbReference type="EC" id="3.1.21.2" evidence="1"/>
<dbReference type="EMBL" id="AE006468">
    <property type="protein sequence ID" value="AAL21107.1"/>
    <property type="molecule type" value="Genomic_DNA"/>
</dbReference>
<dbReference type="RefSeq" id="NP_461148.1">
    <property type="nucleotide sequence ID" value="NC_003197.2"/>
</dbReference>
<dbReference type="RefSeq" id="WP_000873909.1">
    <property type="nucleotide sequence ID" value="NC_003197.2"/>
</dbReference>
<dbReference type="SMR" id="Q8ZNK6"/>
<dbReference type="STRING" id="99287.STM2203"/>
<dbReference type="PaxDb" id="99287-STM2203"/>
<dbReference type="GeneID" id="1253725"/>
<dbReference type="KEGG" id="stm:STM2203"/>
<dbReference type="PATRIC" id="fig|99287.12.peg.2332"/>
<dbReference type="HOGENOM" id="CLU_025885_0_4_6"/>
<dbReference type="OMA" id="HPGSHLR"/>
<dbReference type="PhylomeDB" id="Q8ZNK6"/>
<dbReference type="BioCyc" id="SENT99287:STM2203-MONOMER"/>
<dbReference type="Proteomes" id="UP000001014">
    <property type="component" value="Chromosome"/>
</dbReference>
<dbReference type="GO" id="GO:0008833">
    <property type="term" value="F:deoxyribonuclease IV (phage-T4-induced) activity"/>
    <property type="evidence" value="ECO:0007669"/>
    <property type="project" value="UniProtKB-UniRule"/>
</dbReference>
<dbReference type="GO" id="GO:0003677">
    <property type="term" value="F:DNA binding"/>
    <property type="evidence" value="ECO:0007669"/>
    <property type="project" value="InterPro"/>
</dbReference>
<dbReference type="GO" id="GO:0003906">
    <property type="term" value="F:DNA-(apurinic or apyrimidinic site) endonuclease activity"/>
    <property type="evidence" value="ECO:0000318"/>
    <property type="project" value="GO_Central"/>
</dbReference>
<dbReference type="GO" id="GO:0008081">
    <property type="term" value="F:phosphoric diester hydrolase activity"/>
    <property type="evidence" value="ECO:0000318"/>
    <property type="project" value="GO_Central"/>
</dbReference>
<dbReference type="GO" id="GO:0008270">
    <property type="term" value="F:zinc ion binding"/>
    <property type="evidence" value="ECO:0007669"/>
    <property type="project" value="UniProtKB-UniRule"/>
</dbReference>
<dbReference type="GO" id="GO:0006284">
    <property type="term" value="P:base-excision repair"/>
    <property type="evidence" value="ECO:0000318"/>
    <property type="project" value="GO_Central"/>
</dbReference>
<dbReference type="CDD" id="cd00019">
    <property type="entry name" value="AP2Ec"/>
    <property type="match status" value="1"/>
</dbReference>
<dbReference type="FunFam" id="3.20.20.150:FF:000001">
    <property type="entry name" value="Probable endonuclease 4"/>
    <property type="match status" value="1"/>
</dbReference>
<dbReference type="Gene3D" id="3.20.20.150">
    <property type="entry name" value="Divalent-metal-dependent TIM barrel enzymes"/>
    <property type="match status" value="1"/>
</dbReference>
<dbReference type="HAMAP" id="MF_00152">
    <property type="entry name" value="Nfo"/>
    <property type="match status" value="1"/>
</dbReference>
<dbReference type="InterPro" id="IPR001719">
    <property type="entry name" value="AP_endonuc_2"/>
</dbReference>
<dbReference type="InterPro" id="IPR018246">
    <property type="entry name" value="AP_endonuc_F2_Zn_BS"/>
</dbReference>
<dbReference type="InterPro" id="IPR036237">
    <property type="entry name" value="Xyl_isomerase-like_sf"/>
</dbReference>
<dbReference type="InterPro" id="IPR013022">
    <property type="entry name" value="Xyl_isomerase-like_TIM-brl"/>
</dbReference>
<dbReference type="NCBIfam" id="TIGR00587">
    <property type="entry name" value="nfo"/>
    <property type="match status" value="1"/>
</dbReference>
<dbReference type="NCBIfam" id="NF002199">
    <property type="entry name" value="PRK01060.1-4"/>
    <property type="match status" value="1"/>
</dbReference>
<dbReference type="PANTHER" id="PTHR21445:SF0">
    <property type="entry name" value="APURINIC-APYRIMIDINIC ENDONUCLEASE"/>
    <property type="match status" value="1"/>
</dbReference>
<dbReference type="PANTHER" id="PTHR21445">
    <property type="entry name" value="ENDONUCLEASE IV ENDODEOXYRIBONUCLEASE IV"/>
    <property type="match status" value="1"/>
</dbReference>
<dbReference type="Pfam" id="PF01261">
    <property type="entry name" value="AP_endonuc_2"/>
    <property type="match status" value="1"/>
</dbReference>
<dbReference type="SMART" id="SM00518">
    <property type="entry name" value="AP2Ec"/>
    <property type="match status" value="1"/>
</dbReference>
<dbReference type="SUPFAM" id="SSF51658">
    <property type="entry name" value="Xylose isomerase-like"/>
    <property type="match status" value="1"/>
</dbReference>
<dbReference type="PROSITE" id="PS00729">
    <property type="entry name" value="AP_NUCLEASE_F2_1"/>
    <property type="match status" value="1"/>
</dbReference>
<dbReference type="PROSITE" id="PS00730">
    <property type="entry name" value="AP_NUCLEASE_F2_2"/>
    <property type="match status" value="1"/>
</dbReference>
<dbReference type="PROSITE" id="PS00731">
    <property type="entry name" value="AP_NUCLEASE_F2_3"/>
    <property type="match status" value="1"/>
</dbReference>
<dbReference type="PROSITE" id="PS51432">
    <property type="entry name" value="AP_NUCLEASE_F2_4"/>
    <property type="match status" value="1"/>
</dbReference>
<reference key="1">
    <citation type="journal article" date="2001" name="Nature">
        <title>Complete genome sequence of Salmonella enterica serovar Typhimurium LT2.</title>
        <authorList>
            <person name="McClelland M."/>
            <person name="Sanderson K.E."/>
            <person name="Spieth J."/>
            <person name="Clifton S.W."/>
            <person name="Latreille P."/>
            <person name="Courtney L."/>
            <person name="Porwollik S."/>
            <person name="Ali J."/>
            <person name="Dante M."/>
            <person name="Du F."/>
            <person name="Hou S."/>
            <person name="Layman D."/>
            <person name="Leonard S."/>
            <person name="Nguyen C."/>
            <person name="Scott K."/>
            <person name="Holmes A."/>
            <person name="Grewal N."/>
            <person name="Mulvaney E."/>
            <person name="Ryan E."/>
            <person name="Sun H."/>
            <person name="Florea L."/>
            <person name="Miller W."/>
            <person name="Stoneking T."/>
            <person name="Nhan M."/>
            <person name="Waterston R."/>
            <person name="Wilson R.K."/>
        </authorList>
    </citation>
    <scope>NUCLEOTIDE SEQUENCE [LARGE SCALE GENOMIC DNA]</scope>
    <source>
        <strain>LT2 / SGSC1412 / ATCC 700720</strain>
    </source>
</reference>
<organism>
    <name type="scientific">Salmonella typhimurium (strain LT2 / SGSC1412 / ATCC 700720)</name>
    <dbReference type="NCBI Taxonomy" id="99287"/>
    <lineage>
        <taxon>Bacteria</taxon>
        <taxon>Pseudomonadati</taxon>
        <taxon>Pseudomonadota</taxon>
        <taxon>Gammaproteobacteria</taxon>
        <taxon>Enterobacterales</taxon>
        <taxon>Enterobacteriaceae</taxon>
        <taxon>Salmonella</taxon>
    </lineage>
</organism>
<evidence type="ECO:0000255" key="1">
    <source>
        <dbReference type="HAMAP-Rule" id="MF_00152"/>
    </source>
</evidence>
<comment type="function">
    <text evidence="1">Endonuclease IV plays a role in DNA repair. It cleaves phosphodiester bonds at apurinic or apyrimidinic (AP) sites, generating a 3'-hydroxyl group and a 5'-terminal sugar phosphate.</text>
</comment>
<comment type="catalytic activity">
    <reaction evidence="1">
        <text>Endonucleolytic cleavage to 5'-phosphooligonucleotide end-products.</text>
        <dbReference type="EC" id="3.1.21.2"/>
    </reaction>
</comment>
<comment type="cofactor">
    <cofactor evidence="1">
        <name>Zn(2+)</name>
        <dbReference type="ChEBI" id="CHEBI:29105"/>
    </cofactor>
    <text evidence="1">Binds 3 Zn(2+) ions.</text>
</comment>
<comment type="similarity">
    <text evidence="1">Belongs to the AP endonuclease 2 family.</text>
</comment>
<name>END4_SALTY</name>
<accession>Q8ZNK6</accession>